<comment type="function">
    <text evidence="1">Catalyzes the interconversion of 2-phosphoglycerate and 3-phosphoglycerate.</text>
</comment>
<comment type="catalytic activity">
    <reaction evidence="1">
        <text>(2R)-2-phosphoglycerate = (2R)-3-phosphoglycerate</text>
        <dbReference type="Rhea" id="RHEA:15901"/>
        <dbReference type="ChEBI" id="CHEBI:58272"/>
        <dbReference type="ChEBI" id="CHEBI:58289"/>
        <dbReference type="EC" id="5.4.2.11"/>
    </reaction>
</comment>
<comment type="pathway">
    <text evidence="1">Carbohydrate degradation; glycolysis; pyruvate from D-glyceraldehyde 3-phosphate: step 3/5.</text>
</comment>
<comment type="similarity">
    <text evidence="1">Belongs to the phosphoglycerate mutase family. BPG-dependent PGAM subfamily.</text>
</comment>
<protein>
    <recommendedName>
        <fullName evidence="1">2,3-bisphosphoglycerate-dependent phosphoglycerate mutase 1</fullName>
        <shortName evidence="1">BPG-dependent PGAM 1</shortName>
        <shortName evidence="1">PGAM 1</shortName>
        <shortName evidence="1">Phosphoglyceromutase 1</shortName>
        <shortName evidence="1">dPGM 1</shortName>
        <ecNumber evidence="1">5.4.2.11</ecNumber>
    </recommendedName>
</protein>
<keyword id="KW-0312">Gluconeogenesis</keyword>
<keyword id="KW-0324">Glycolysis</keyword>
<keyword id="KW-0413">Isomerase</keyword>
<keyword id="KW-1185">Reference proteome</keyword>
<organism>
    <name type="scientific">Latilactobacillus sakei subsp. sakei (strain 23K)</name>
    <name type="common">Lactobacillus sakei subsp. sakei</name>
    <dbReference type="NCBI Taxonomy" id="314315"/>
    <lineage>
        <taxon>Bacteria</taxon>
        <taxon>Bacillati</taxon>
        <taxon>Bacillota</taxon>
        <taxon>Bacilli</taxon>
        <taxon>Lactobacillales</taxon>
        <taxon>Lactobacillaceae</taxon>
        <taxon>Latilactobacillus</taxon>
    </lineage>
</organism>
<name>GPMA1_LATSS</name>
<accession>Q38ZH8</accession>
<evidence type="ECO:0000255" key="1">
    <source>
        <dbReference type="HAMAP-Rule" id="MF_01039"/>
    </source>
</evidence>
<sequence>MANLVIVRHGESVANQLKTYTGWSDVALTAKGRQQAHQVGRQIKDAGFQFSHVHTSLLKRAILTSYIVLEELDQLALPMTKSWRLNERHYGALRGLNKDTTRTIFGVHQVARWRRSYTALPPLLIRSSTARRYRLVPRKSRPRGESLAQATQRLLPYWQDQVVPGLLAGQDQLIVAHGSTLRALIKVIEQISDQAIDGVEVANGEALYYQFGTDLTVLKKGRLALGSETDEEKEN</sequence>
<feature type="chain" id="PRO_0000229124" description="2,3-bisphosphoglycerate-dependent phosphoglycerate mutase 1">
    <location>
        <begin position="1"/>
        <end position="235"/>
    </location>
</feature>
<feature type="active site" description="Tele-phosphohistidine intermediate" evidence="1">
    <location>
        <position position="9"/>
    </location>
</feature>
<feature type="active site" description="Proton donor/acceptor" evidence="1">
    <location>
        <position position="87"/>
    </location>
</feature>
<feature type="binding site" evidence="1">
    <location>
        <begin position="8"/>
        <end position="15"/>
    </location>
    <ligand>
        <name>substrate</name>
    </ligand>
</feature>
<feature type="binding site" evidence="1">
    <location>
        <begin position="21"/>
        <end position="22"/>
    </location>
    <ligand>
        <name>substrate</name>
    </ligand>
</feature>
<feature type="binding site" evidence="1">
    <location>
        <position position="60"/>
    </location>
    <ligand>
        <name>substrate</name>
    </ligand>
</feature>
<feature type="binding site" evidence="1">
    <location>
        <begin position="87"/>
        <end position="90"/>
    </location>
    <ligand>
        <name>substrate</name>
    </ligand>
</feature>
<feature type="binding site" evidence="1">
    <location>
        <position position="98"/>
    </location>
    <ligand>
        <name>substrate</name>
    </ligand>
</feature>
<feature type="binding site" evidence="1">
    <location>
        <begin position="114"/>
        <end position="115"/>
    </location>
    <ligand>
        <name>substrate</name>
    </ligand>
</feature>
<feature type="site" description="Transition state stabilizer" evidence="1">
    <location>
        <position position="177"/>
    </location>
</feature>
<reference key="1">
    <citation type="journal article" date="2005" name="Nat. Biotechnol.">
        <title>The complete genome sequence of the meat-borne lactic acid bacterium Lactobacillus sakei 23K.</title>
        <authorList>
            <person name="Chaillou S."/>
            <person name="Champomier-Verges M.-C."/>
            <person name="Cornet M."/>
            <person name="Crutz-Le Coq A.-M."/>
            <person name="Dudez A.-M."/>
            <person name="Martin V."/>
            <person name="Beaufils S."/>
            <person name="Darbon-Rongere E."/>
            <person name="Bossy R."/>
            <person name="Loux V."/>
            <person name="Zagorec M."/>
        </authorList>
    </citation>
    <scope>NUCLEOTIDE SEQUENCE [LARGE SCALE GENOMIC DNA]</scope>
    <source>
        <strain>23K</strain>
    </source>
</reference>
<proteinExistence type="inferred from homology"/>
<dbReference type="EC" id="5.4.2.11" evidence="1"/>
<dbReference type="EMBL" id="CR936503">
    <property type="protein sequence ID" value="CAI54399.1"/>
    <property type="molecule type" value="Genomic_DNA"/>
</dbReference>
<dbReference type="RefSeq" id="WP_011373813.1">
    <property type="nucleotide sequence ID" value="NC_007576.1"/>
</dbReference>
<dbReference type="SMR" id="Q38ZH8"/>
<dbReference type="STRING" id="314315.LCA_0100"/>
<dbReference type="KEGG" id="lsa:LCA_0100"/>
<dbReference type="eggNOG" id="COG0588">
    <property type="taxonomic scope" value="Bacteria"/>
</dbReference>
<dbReference type="HOGENOM" id="CLU_033323_1_1_9"/>
<dbReference type="OrthoDB" id="9781415at2"/>
<dbReference type="UniPathway" id="UPA00109">
    <property type="reaction ID" value="UER00186"/>
</dbReference>
<dbReference type="Proteomes" id="UP000002707">
    <property type="component" value="Chromosome"/>
</dbReference>
<dbReference type="GO" id="GO:0004619">
    <property type="term" value="F:phosphoglycerate mutase activity"/>
    <property type="evidence" value="ECO:0007669"/>
    <property type="project" value="UniProtKB-EC"/>
</dbReference>
<dbReference type="GO" id="GO:0006094">
    <property type="term" value="P:gluconeogenesis"/>
    <property type="evidence" value="ECO:0007669"/>
    <property type="project" value="UniProtKB-UniRule"/>
</dbReference>
<dbReference type="GO" id="GO:0006096">
    <property type="term" value="P:glycolytic process"/>
    <property type="evidence" value="ECO:0007669"/>
    <property type="project" value="UniProtKB-UniRule"/>
</dbReference>
<dbReference type="CDD" id="cd07067">
    <property type="entry name" value="HP_PGM_like"/>
    <property type="match status" value="1"/>
</dbReference>
<dbReference type="Gene3D" id="3.40.50.1240">
    <property type="entry name" value="Phosphoglycerate mutase-like"/>
    <property type="match status" value="1"/>
</dbReference>
<dbReference type="HAMAP" id="MF_01039">
    <property type="entry name" value="PGAM_GpmA"/>
    <property type="match status" value="1"/>
</dbReference>
<dbReference type="InterPro" id="IPR013078">
    <property type="entry name" value="His_Pase_superF_clade-1"/>
</dbReference>
<dbReference type="InterPro" id="IPR029033">
    <property type="entry name" value="His_PPase_superfam"/>
</dbReference>
<dbReference type="InterPro" id="IPR001345">
    <property type="entry name" value="PG/BPGM_mutase_AS"/>
</dbReference>
<dbReference type="InterPro" id="IPR005952">
    <property type="entry name" value="Phosphogly_mut1"/>
</dbReference>
<dbReference type="NCBIfam" id="TIGR01258">
    <property type="entry name" value="pgm_1"/>
    <property type="match status" value="1"/>
</dbReference>
<dbReference type="PANTHER" id="PTHR11931">
    <property type="entry name" value="PHOSPHOGLYCERATE MUTASE"/>
    <property type="match status" value="1"/>
</dbReference>
<dbReference type="Pfam" id="PF00300">
    <property type="entry name" value="His_Phos_1"/>
    <property type="match status" value="2"/>
</dbReference>
<dbReference type="PIRSF" id="PIRSF000709">
    <property type="entry name" value="6PFK_2-Ptase"/>
    <property type="match status" value="1"/>
</dbReference>
<dbReference type="SMART" id="SM00855">
    <property type="entry name" value="PGAM"/>
    <property type="match status" value="1"/>
</dbReference>
<dbReference type="SUPFAM" id="SSF53254">
    <property type="entry name" value="Phosphoglycerate mutase-like"/>
    <property type="match status" value="1"/>
</dbReference>
<dbReference type="PROSITE" id="PS00175">
    <property type="entry name" value="PG_MUTASE"/>
    <property type="match status" value="1"/>
</dbReference>
<gene>
    <name evidence="1" type="primary">gpmA1</name>
    <name type="ordered locus">LCA_0100</name>
</gene>